<evidence type="ECO:0000255" key="1">
    <source>
        <dbReference type="HAMAP-Rule" id="MF_02008"/>
    </source>
</evidence>
<sequence length="327" mass="36423">MNAYERITRNTAEVVTEEEVRELAEDPEGKRVYVGYEPSGVLHLGHLLTANKLMDLQDAGMEVVVLLADVHAYLNDKGSFEEIRATADQMKAQFLAYGLDEDQTEFVLGSSFQLDEDYELDLHAMQVETSLKRAQRAMAEIQSGETPKVSHVVYPLMQALDIEYLDLDLAIGGMDQRKVHMLAREELPSVGYEKRPVLHTPIIGDLGSGDGKMSSSEGVTISMEDSTADIEEKVTGAFCPQTRDPEGETVNPVLELFQYHVFPRFDEVVVQRPDEYGGDLVYESYEDLADDLESGELHPADAKGALAAALDELIEPGRQRLREIRGE</sequence>
<comment type="function">
    <text evidence="1">Catalyzes the attachment of tyrosine to tRNA(Tyr) in a two-step reaction: tyrosine is first activated by ATP to form Tyr-AMP and then transferred to the acceptor end of tRNA(Tyr).</text>
</comment>
<comment type="catalytic activity">
    <reaction evidence="1">
        <text>tRNA(Tyr) + L-tyrosine + ATP = L-tyrosyl-tRNA(Tyr) + AMP + diphosphate + H(+)</text>
        <dbReference type="Rhea" id="RHEA:10220"/>
        <dbReference type="Rhea" id="RHEA-COMP:9706"/>
        <dbReference type="Rhea" id="RHEA-COMP:9707"/>
        <dbReference type="ChEBI" id="CHEBI:15378"/>
        <dbReference type="ChEBI" id="CHEBI:30616"/>
        <dbReference type="ChEBI" id="CHEBI:33019"/>
        <dbReference type="ChEBI" id="CHEBI:58315"/>
        <dbReference type="ChEBI" id="CHEBI:78442"/>
        <dbReference type="ChEBI" id="CHEBI:78536"/>
        <dbReference type="ChEBI" id="CHEBI:456215"/>
        <dbReference type="EC" id="6.1.1.1"/>
    </reaction>
</comment>
<comment type="subunit">
    <text evidence="1">Homodimer.</text>
</comment>
<comment type="subcellular location">
    <subcellularLocation>
        <location evidence="1">Cytoplasm</location>
    </subcellularLocation>
</comment>
<comment type="similarity">
    <text evidence="1">Belongs to the class-I aminoacyl-tRNA synthetase family. TyrS type 3 subfamily.</text>
</comment>
<keyword id="KW-0030">Aminoacyl-tRNA synthetase</keyword>
<keyword id="KW-0067">ATP-binding</keyword>
<keyword id="KW-0963">Cytoplasm</keyword>
<keyword id="KW-0436">Ligase</keyword>
<keyword id="KW-0547">Nucleotide-binding</keyword>
<keyword id="KW-0648">Protein biosynthesis</keyword>
<keyword id="KW-1185">Reference proteome</keyword>
<organism>
    <name type="scientific">Halobacterium salinarum (strain ATCC 700922 / JCM 11081 / NRC-1)</name>
    <name type="common">Halobacterium halobium</name>
    <dbReference type="NCBI Taxonomy" id="64091"/>
    <lineage>
        <taxon>Archaea</taxon>
        <taxon>Methanobacteriati</taxon>
        <taxon>Methanobacteriota</taxon>
        <taxon>Stenosarchaea group</taxon>
        <taxon>Halobacteria</taxon>
        <taxon>Halobacteriales</taxon>
        <taxon>Halobacteriaceae</taxon>
        <taxon>Halobacterium</taxon>
        <taxon>Halobacterium salinarum NRC-34001</taxon>
    </lineage>
</organism>
<accession>Q9HN62</accession>
<dbReference type="EC" id="6.1.1.1" evidence="1"/>
<dbReference type="EMBL" id="AE004437">
    <property type="protein sequence ID" value="AAG20359.1"/>
    <property type="molecule type" value="Genomic_DNA"/>
</dbReference>
<dbReference type="PIR" id="C84374">
    <property type="entry name" value="C84374"/>
</dbReference>
<dbReference type="RefSeq" id="WP_010903660.1">
    <property type="nucleotide sequence ID" value="NC_002607.1"/>
</dbReference>
<dbReference type="SMR" id="Q9HN62"/>
<dbReference type="FunCoup" id="Q9HN62">
    <property type="interactions" value="199"/>
</dbReference>
<dbReference type="STRING" id="64091.VNG_2237G"/>
<dbReference type="PaxDb" id="64091-VNG_2237G"/>
<dbReference type="KEGG" id="hal:VNG_2237G"/>
<dbReference type="PATRIC" id="fig|64091.14.peg.1719"/>
<dbReference type="HOGENOM" id="CLU_035267_0_1_2"/>
<dbReference type="InParanoid" id="Q9HN62"/>
<dbReference type="OrthoDB" id="8389at2157"/>
<dbReference type="PhylomeDB" id="Q9HN62"/>
<dbReference type="Proteomes" id="UP000000554">
    <property type="component" value="Chromosome"/>
</dbReference>
<dbReference type="GO" id="GO:0005737">
    <property type="term" value="C:cytoplasm"/>
    <property type="evidence" value="ECO:0000318"/>
    <property type="project" value="GO_Central"/>
</dbReference>
<dbReference type="GO" id="GO:0005524">
    <property type="term" value="F:ATP binding"/>
    <property type="evidence" value="ECO:0007669"/>
    <property type="project" value="UniProtKB-UniRule"/>
</dbReference>
<dbReference type="GO" id="GO:0004831">
    <property type="term" value="F:tyrosine-tRNA ligase activity"/>
    <property type="evidence" value="ECO:0000318"/>
    <property type="project" value="GO_Central"/>
</dbReference>
<dbReference type="GO" id="GO:0006437">
    <property type="term" value="P:tyrosyl-tRNA aminoacylation"/>
    <property type="evidence" value="ECO:0000318"/>
    <property type="project" value="GO_Central"/>
</dbReference>
<dbReference type="CDD" id="cd00805">
    <property type="entry name" value="TyrRS_core"/>
    <property type="match status" value="1"/>
</dbReference>
<dbReference type="Gene3D" id="3.40.50.620">
    <property type="entry name" value="HUPs"/>
    <property type="match status" value="1"/>
</dbReference>
<dbReference type="Gene3D" id="1.10.240.10">
    <property type="entry name" value="Tyrosyl-Transfer RNA Synthetase"/>
    <property type="match status" value="1"/>
</dbReference>
<dbReference type="HAMAP" id="MF_02008">
    <property type="entry name" value="Tyr_tRNA_synth_type3"/>
    <property type="match status" value="1"/>
</dbReference>
<dbReference type="InterPro" id="IPR001412">
    <property type="entry name" value="aa-tRNA-synth_I_CS"/>
</dbReference>
<dbReference type="InterPro" id="IPR002305">
    <property type="entry name" value="aa-tRNA-synth_Ic"/>
</dbReference>
<dbReference type="InterPro" id="IPR014729">
    <property type="entry name" value="Rossmann-like_a/b/a_fold"/>
</dbReference>
<dbReference type="InterPro" id="IPR002307">
    <property type="entry name" value="Tyr-tRNA-ligase"/>
</dbReference>
<dbReference type="InterPro" id="IPR023684">
    <property type="entry name" value="Tyr-tRNA-ligase_3"/>
</dbReference>
<dbReference type="InterPro" id="IPR023617">
    <property type="entry name" value="Tyr-tRNA-ligase_arc/euk-type"/>
</dbReference>
<dbReference type="InterPro" id="IPR050489">
    <property type="entry name" value="Tyr-tRNA_synthase"/>
</dbReference>
<dbReference type="NCBIfam" id="NF006330">
    <property type="entry name" value="PRK08560.1"/>
    <property type="match status" value="1"/>
</dbReference>
<dbReference type="NCBIfam" id="TIGR00234">
    <property type="entry name" value="tyrS"/>
    <property type="match status" value="1"/>
</dbReference>
<dbReference type="PANTHER" id="PTHR46264:SF4">
    <property type="entry name" value="TYROSINE--TRNA LIGASE, CYTOPLASMIC"/>
    <property type="match status" value="1"/>
</dbReference>
<dbReference type="PANTHER" id="PTHR46264">
    <property type="entry name" value="TYROSINE-TRNA LIGASE"/>
    <property type="match status" value="1"/>
</dbReference>
<dbReference type="Pfam" id="PF00579">
    <property type="entry name" value="tRNA-synt_1b"/>
    <property type="match status" value="1"/>
</dbReference>
<dbReference type="PIRSF" id="PIRSF006588">
    <property type="entry name" value="TyrRS_arch_euk"/>
    <property type="match status" value="1"/>
</dbReference>
<dbReference type="PRINTS" id="PR01040">
    <property type="entry name" value="TRNASYNTHTYR"/>
</dbReference>
<dbReference type="SUPFAM" id="SSF52374">
    <property type="entry name" value="Nucleotidylyl transferase"/>
    <property type="match status" value="1"/>
</dbReference>
<dbReference type="PROSITE" id="PS00178">
    <property type="entry name" value="AA_TRNA_LIGASE_I"/>
    <property type="match status" value="1"/>
</dbReference>
<proteinExistence type="inferred from homology"/>
<reference key="1">
    <citation type="journal article" date="2000" name="Proc. Natl. Acad. Sci. U.S.A.">
        <title>Genome sequence of Halobacterium species NRC-1.</title>
        <authorList>
            <person name="Ng W.V."/>
            <person name="Kennedy S.P."/>
            <person name="Mahairas G.G."/>
            <person name="Berquist B."/>
            <person name="Pan M."/>
            <person name="Shukla H.D."/>
            <person name="Lasky S.R."/>
            <person name="Baliga N.S."/>
            <person name="Thorsson V."/>
            <person name="Sbrogna J."/>
            <person name="Swartzell S."/>
            <person name="Weir D."/>
            <person name="Hall J."/>
            <person name="Dahl T.A."/>
            <person name="Welti R."/>
            <person name="Goo Y.A."/>
            <person name="Leithauser B."/>
            <person name="Keller K."/>
            <person name="Cruz R."/>
            <person name="Danson M.J."/>
            <person name="Hough D.W."/>
            <person name="Maddocks D.G."/>
            <person name="Jablonski P.E."/>
            <person name="Krebs M.P."/>
            <person name="Angevine C.M."/>
            <person name="Dale H."/>
            <person name="Isenbarger T.A."/>
            <person name="Peck R.F."/>
            <person name="Pohlschroder M."/>
            <person name="Spudich J.L."/>
            <person name="Jung K.-H."/>
            <person name="Alam M."/>
            <person name="Freitas T."/>
            <person name="Hou S."/>
            <person name="Daniels C.J."/>
            <person name="Dennis P.P."/>
            <person name="Omer A.D."/>
            <person name="Ebhardt H."/>
            <person name="Lowe T.M."/>
            <person name="Liang P."/>
            <person name="Riley M."/>
            <person name="Hood L."/>
            <person name="DasSarma S."/>
        </authorList>
    </citation>
    <scope>NUCLEOTIDE SEQUENCE [LARGE SCALE GENOMIC DNA]</scope>
    <source>
        <strain>ATCC 700922 / JCM 11081 / NRC-1</strain>
    </source>
</reference>
<feature type="chain" id="PRO_0000240253" description="Tyrosine--tRNA ligase">
    <location>
        <begin position="1"/>
        <end position="327"/>
    </location>
</feature>
<feature type="short sequence motif" description="'HIGH' region">
    <location>
        <begin position="38"/>
        <end position="46"/>
    </location>
</feature>
<feature type="short sequence motif" description="'KMSKS' region">
    <location>
        <begin position="212"/>
        <end position="216"/>
    </location>
</feature>
<feature type="binding site" evidence="1">
    <location>
        <position position="33"/>
    </location>
    <ligand>
        <name>L-tyrosine</name>
        <dbReference type="ChEBI" id="CHEBI:58315"/>
    </ligand>
</feature>
<feature type="binding site" evidence="1">
    <location>
        <position position="154"/>
    </location>
    <ligand>
        <name>L-tyrosine</name>
        <dbReference type="ChEBI" id="CHEBI:58315"/>
    </ligand>
</feature>
<feature type="binding site" evidence="1">
    <location>
        <position position="158"/>
    </location>
    <ligand>
        <name>L-tyrosine</name>
        <dbReference type="ChEBI" id="CHEBI:58315"/>
    </ligand>
</feature>
<feature type="binding site" evidence="1">
    <location>
        <position position="161"/>
    </location>
    <ligand>
        <name>L-tyrosine</name>
        <dbReference type="ChEBI" id="CHEBI:58315"/>
    </ligand>
</feature>
<feature type="binding site" evidence="1">
    <location>
        <position position="176"/>
    </location>
    <ligand>
        <name>L-tyrosine</name>
        <dbReference type="ChEBI" id="CHEBI:58315"/>
    </ligand>
</feature>
<feature type="binding site" evidence="1">
    <location>
        <position position="215"/>
    </location>
    <ligand>
        <name>ATP</name>
        <dbReference type="ChEBI" id="CHEBI:30616"/>
    </ligand>
</feature>
<name>SYY_HALSA</name>
<protein>
    <recommendedName>
        <fullName evidence="1">Tyrosine--tRNA ligase</fullName>
        <ecNumber evidence="1">6.1.1.1</ecNumber>
    </recommendedName>
    <alternativeName>
        <fullName evidence="1">Tyrosyl-tRNA synthetase</fullName>
        <shortName evidence="1">TyrRS</shortName>
    </alternativeName>
</protein>
<gene>
    <name evidence="1" type="primary">tyrS</name>
    <name type="ordered locus">VNG_2237G</name>
</gene>